<reference key="1">
    <citation type="journal article" date="2005" name="Science">
        <title>Genome streamlining in a cosmopolitan oceanic bacterium.</title>
        <authorList>
            <person name="Giovannoni S.J."/>
            <person name="Tripp H.J."/>
            <person name="Givan S."/>
            <person name="Podar M."/>
            <person name="Vergin K.L."/>
            <person name="Baptista D."/>
            <person name="Bibbs L."/>
            <person name="Eads J."/>
            <person name="Richardson T.H."/>
            <person name="Noordewier M."/>
            <person name="Rappe M.S."/>
            <person name="Short J.M."/>
            <person name="Carrington J.C."/>
            <person name="Mathur E.J."/>
        </authorList>
    </citation>
    <scope>NUCLEOTIDE SEQUENCE [LARGE SCALE GENOMIC DNA]</scope>
    <source>
        <strain>HTCC1062</strain>
    </source>
</reference>
<accession>Q4FN21</accession>
<proteinExistence type="inferred from homology"/>
<feature type="signal peptide" evidence="1">
    <location>
        <begin position="1"/>
        <end position="19"/>
    </location>
</feature>
<feature type="chain" id="PRO_0000259065" description="Tol-Pal system protein TolB" evidence="1">
    <location>
        <begin position="20"/>
        <end position="446"/>
    </location>
</feature>
<protein>
    <recommendedName>
        <fullName evidence="1">Tol-Pal system protein TolB</fullName>
    </recommendedName>
</protein>
<gene>
    <name evidence="1" type="primary">tolB</name>
    <name type="ordered locus">SAR11_0597</name>
</gene>
<keyword id="KW-0131">Cell cycle</keyword>
<keyword id="KW-0132">Cell division</keyword>
<keyword id="KW-0574">Periplasm</keyword>
<keyword id="KW-1185">Reference proteome</keyword>
<keyword id="KW-0732">Signal</keyword>
<comment type="function">
    <text evidence="1">Part of the Tol-Pal system, which plays a role in outer membrane invagination during cell division and is important for maintaining outer membrane integrity.</text>
</comment>
<comment type="subunit">
    <text evidence="1">The Tol-Pal system is composed of five core proteins: the inner membrane proteins TolA, TolQ and TolR, the periplasmic protein TolB and the outer membrane protein Pal. They form a network linking the inner and outer membranes and the peptidoglycan layer.</text>
</comment>
<comment type="subcellular location">
    <subcellularLocation>
        <location evidence="1">Periplasm</location>
    </subcellularLocation>
</comment>
<comment type="similarity">
    <text evidence="1">Belongs to the TolB family.</text>
</comment>
<dbReference type="EMBL" id="CP000084">
    <property type="protein sequence ID" value="AAZ21418.1"/>
    <property type="molecule type" value="Genomic_DNA"/>
</dbReference>
<dbReference type="RefSeq" id="WP_006997307.1">
    <property type="nucleotide sequence ID" value="NC_007205.1"/>
</dbReference>
<dbReference type="SMR" id="Q4FN21"/>
<dbReference type="STRING" id="335992.SAR11_0597"/>
<dbReference type="GeneID" id="66295102"/>
<dbReference type="KEGG" id="pub:SAR11_0597"/>
<dbReference type="eggNOG" id="COG0823">
    <property type="taxonomic scope" value="Bacteria"/>
</dbReference>
<dbReference type="HOGENOM" id="CLU_047123_0_0_5"/>
<dbReference type="OrthoDB" id="9802240at2"/>
<dbReference type="Proteomes" id="UP000002528">
    <property type="component" value="Chromosome"/>
</dbReference>
<dbReference type="GO" id="GO:0042597">
    <property type="term" value="C:periplasmic space"/>
    <property type="evidence" value="ECO:0007669"/>
    <property type="project" value="UniProtKB-SubCell"/>
</dbReference>
<dbReference type="GO" id="GO:0051301">
    <property type="term" value="P:cell division"/>
    <property type="evidence" value="ECO:0007669"/>
    <property type="project" value="UniProtKB-UniRule"/>
</dbReference>
<dbReference type="GO" id="GO:0017038">
    <property type="term" value="P:protein import"/>
    <property type="evidence" value="ECO:0007669"/>
    <property type="project" value="InterPro"/>
</dbReference>
<dbReference type="Gene3D" id="2.120.10.30">
    <property type="entry name" value="TolB, C-terminal domain"/>
    <property type="match status" value="1"/>
</dbReference>
<dbReference type="Gene3D" id="3.40.50.10070">
    <property type="entry name" value="TolB, N-terminal domain"/>
    <property type="match status" value="1"/>
</dbReference>
<dbReference type="HAMAP" id="MF_00671">
    <property type="entry name" value="TolB"/>
    <property type="match status" value="1"/>
</dbReference>
<dbReference type="InterPro" id="IPR011042">
    <property type="entry name" value="6-blade_b-propeller_TolB-like"/>
</dbReference>
<dbReference type="InterPro" id="IPR011659">
    <property type="entry name" value="PD40"/>
</dbReference>
<dbReference type="InterPro" id="IPR014167">
    <property type="entry name" value="Tol-Pal_TolB"/>
</dbReference>
<dbReference type="InterPro" id="IPR007195">
    <property type="entry name" value="TolB_N"/>
</dbReference>
<dbReference type="NCBIfam" id="TIGR02800">
    <property type="entry name" value="propeller_TolB"/>
    <property type="match status" value="1"/>
</dbReference>
<dbReference type="PANTHER" id="PTHR36842:SF1">
    <property type="entry name" value="PROTEIN TOLB"/>
    <property type="match status" value="1"/>
</dbReference>
<dbReference type="PANTHER" id="PTHR36842">
    <property type="entry name" value="PROTEIN TOLB HOMOLOG"/>
    <property type="match status" value="1"/>
</dbReference>
<dbReference type="Pfam" id="PF07676">
    <property type="entry name" value="PD40"/>
    <property type="match status" value="3"/>
</dbReference>
<dbReference type="Pfam" id="PF04052">
    <property type="entry name" value="TolB_N"/>
    <property type="match status" value="1"/>
</dbReference>
<dbReference type="SUPFAM" id="SSF52964">
    <property type="entry name" value="TolB, N-terminal domain"/>
    <property type="match status" value="1"/>
</dbReference>
<dbReference type="SUPFAM" id="SSF69304">
    <property type="entry name" value="Tricorn protease N-terminal domain"/>
    <property type="match status" value="1"/>
</dbReference>
<evidence type="ECO:0000255" key="1">
    <source>
        <dbReference type="HAMAP-Rule" id="MF_00671"/>
    </source>
</evidence>
<name>TOLB_PELUB</name>
<organism>
    <name type="scientific">Pelagibacter ubique (strain HTCC1062)</name>
    <dbReference type="NCBI Taxonomy" id="335992"/>
    <lineage>
        <taxon>Bacteria</taxon>
        <taxon>Pseudomonadati</taxon>
        <taxon>Pseudomonadota</taxon>
        <taxon>Alphaproteobacteria</taxon>
        <taxon>Candidatus Pelagibacterales</taxon>
        <taxon>Candidatus Pelagibacteraceae</taxon>
        <taxon>Candidatus Pelagibacter</taxon>
    </lineage>
</organism>
<sequence>MLLRYLFILFIIIPIKAFALIEVDITRGNLNPLPVAVSPLSIDNKSKENFKKILKQEDLGSEISIVVENNLRQSGLFNPLDKNAFLQEPDVANLKPRFEDWNLIKAQALVTGKVTFVDEKLRVEFRLWDVLAGKEMMALAFTTVPSNWRRVGHIITDKVYERLTGEKGYFDTRIIYVSEEGPKTKRIKKLAIMDQDGFNNKYLTLGNELVLTPRFSPTNQMVTYLSYFRNLPRVYLLDIETGMQEVVGDFPGMTFAPRFSPDGKKIIMSFAKDGNSDIYTMDLENRIVERITNHPSIDTSPSYSPDGKKITFNSDRSGYQQIYVMDSNGKNVKRISFGNGLYGTPVWSPRGDLIAFTKLHKGKFYIGVMRTDGTGERLLTENFYQEAPSWSPNGRVLIFYRETKTNSKGEGFSAKLWSIDLTGYNEKMVETETDASDPSWSSLLSN</sequence>